<protein>
    <recommendedName>
        <fullName>Galanin peptides</fullName>
    </recommendedName>
    <component>
        <recommendedName>
            <fullName>Galanin</fullName>
        </recommendedName>
    </component>
    <component>
        <recommendedName>
            <fullName>Galanin message-associated peptide</fullName>
            <shortName>GMAP</shortName>
        </recommendedName>
    </component>
</protein>
<feature type="signal peptide" evidence="3">
    <location>
        <begin position="1"/>
        <end position="19"/>
    </location>
</feature>
<feature type="propeptide" id="PRO_0000010457">
    <location>
        <begin position="20"/>
        <end position="30"/>
    </location>
</feature>
<feature type="peptide" id="PRO_0000010458" description="Galanin">
    <location>
        <begin position="33"/>
        <end position="61"/>
    </location>
</feature>
<feature type="peptide" id="PRO_0000010459" description="Galanin message-associated peptide">
    <location>
        <begin position="65"/>
        <end position="124"/>
    </location>
</feature>
<feature type="modified residue" description="Threonine amide" evidence="4">
    <location>
        <position position="61"/>
    </location>
</feature>
<feature type="modified residue" description="Phosphoserine" evidence="2">
    <location>
        <position position="117"/>
    </location>
</feature>
<feature type="modified residue" description="Phosphoserine" evidence="2">
    <location>
        <position position="118"/>
    </location>
</feature>
<name>GALA_RAT</name>
<keyword id="KW-0027">Amidation</keyword>
<keyword id="KW-0165">Cleavage on pair of basic residues</keyword>
<keyword id="KW-0372">Hormone</keyword>
<keyword id="KW-0527">Neuropeptide</keyword>
<keyword id="KW-0597">Phosphoprotein</keyword>
<keyword id="KW-1185">Reference proteome</keyword>
<keyword id="KW-0964">Secreted</keyword>
<keyword id="KW-0732">Signal</keyword>
<accession>P10683</accession>
<proteinExistence type="evidence at protein level"/>
<reference key="1">
    <citation type="journal article" date="1988" name="Proc. Natl. Acad. Sci. U.S.A.">
        <title>Tissue-specific expression of the rat galanin gene.</title>
        <authorList>
            <person name="Kaplan L.M."/>
            <person name="Spindel E.R."/>
            <person name="Isselbacher K.J."/>
            <person name="Chin W.W."/>
        </authorList>
    </citation>
    <scope>NUCLEOTIDE SEQUENCE [MRNA]</scope>
    <scope>AMIDATION AT THR-61</scope>
</reference>
<reference key="2">
    <citation type="journal article" date="1987" name="J. Biol. Chem.">
        <title>Isolation and characterization of a complementary DNA (galanin) clone from estrogen-induced pituitary tumor messenger RNA.</title>
        <authorList>
            <person name="Vrontakis M.E."/>
            <person name="Peden L.M."/>
            <person name="Duckworth M.L."/>
            <person name="Friesen H.G."/>
        </authorList>
    </citation>
    <scope>NUCLEOTIDE SEQUENCE [MRNA]</scope>
</reference>
<dbReference type="EMBL" id="J03624">
    <property type="protein sequence ID" value="AAA41186.1"/>
    <property type="molecule type" value="mRNA"/>
</dbReference>
<dbReference type="EMBL" id="M18102">
    <property type="protein sequence ID" value="AAA41187.1"/>
    <property type="molecule type" value="mRNA"/>
</dbReference>
<dbReference type="PIR" id="A28463">
    <property type="entry name" value="RHRTN"/>
</dbReference>
<dbReference type="RefSeq" id="NP_150240.1">
    <property type="nucleotide sequence ID" value="NM_033237.1"/>
</dbReference>
<dbReference type="BMRB" id="P10683"/>
<dbReference type="FunCoup" id="P10683">
    <property type="interactions" value="20"/>
</dbReference>
<dbReference type="STRING" id="10116.ENSRNOP00000020425"/>
<dbReference type="BindingDB" id="P10683"/>
<dbReference type="iPTMnet" id="P10683"/>
<dbReference type="PhosphoSitePlus" id="P10683"/>
<dbReference type="PaxDb" id="10116-ENSRNOP00000020425"/>
<dbReference type="Ensembl" id="ENSRNOT00000020425.6">
    <property type="protein sequence ID" value="ENSRNOP00000020425.3"/>
    <property type="gene ID" value="ENSRNOG00000015156.6"/>
</dbReference>
<dbReference type="GeneID" id="29141"/>
<dbReference type="KEGG" id="rno:29141"/>
<dbReference type="UCSC" id="RGD:61954">
    <property type="organism name" value="rat"/>
</dbReference>
<dbReference type="AGR" id="RGD:61954"/>
<dbReference type="CTD" id="51083"/>
<dbReference type="RGD" id="61954">
    <property type="gene designation" value="Gal"/>
</dbReference>
<dbReference type="eggNOG" id="ENOG502RZ1E">
    <property type="taxonomic scope" value="Eukaryota"/>
</dbReference>
<dbReference type="GeneTree" id="ENSGT00390000009663"/>
<dbReference type="HOGENOM" id="CLU_166244_0_0_1"/>
<dbReference type="InParanoid" id="P10683"/>
<dbReference type="OMA" id="PHAVDSH"/>
<dbReference type="OrthoDB" id="8721537at2759"/>
<dbReference type="PhylomeDB" id="P10683"/>
<dbReference type="TreeFam" id="TF335850"/>
<dbReference type="Reactome" id="R-RNO-375276">
    <property type="pathway name" value="Peptide ligand-binding receptors"/>
</dbReference>
<dbReference type="Reactome" id="R-RNO-418594">
    <property type="pathway name" value="G alpha (i) signalling events"/>
</dbReference>
<dbReference type="PRO" id="PR:P10683"/>
<dbReference type="Proteomes" id="UP000002494">
    <property type="component" value="Chromosome 1"/>
</dbReference>
<dbReference type="Bgee" id="ENSRNOG00000015156">
    <property type="expression patterns" value="Expressed in colon and 11 other cell types or tissues"/>
</dbReference>
<dbReference type="GO" id="GO:0005615">
    <property type="term" value="C:extracellular space"/>
    <property type="evidence" value="ECO:0000266"/>
    <property type="project" value="RGD"/>
</dbReference>
<dbReference type="GO" id="GO:0043025">
    <property type="term" value="C:neuronal cell body"/>
    <property type="evidence" value="ECO:0000266"/>
    <property type="project" value="RGD"/>
</dbReference>
<dbReference type="GO" id="GO:0030141">
    <property type="term" value="C:secretory granule"/>
    <property type="evidence" value="ECO:0000314"/>
    <property type="project" value="RGD"/>
</dbReference>
<dbReference type="GO" id="GO:0001664">
    <property type="term" value="F:G protein-coupled receptor binding"/>
    <property type="evidence" value="ECO:0000304"/>
    <property type="project" value="RGD"/>
</dbReference>
<dbReference type="GO" id="GO:0004966">
    <property type="term" value="F:galanin receptor activity"/>
    <property type="evidence" value="ECO:0000250"/>
    <property type="project" value="UniProtKB"/>
</dbReference>
<dbReference type="GO" id="GO:0031763">
    <property type="term" value="F:galanin receptor binding"/>
    <property type="evidence" value="ECO:0000318"/>
    <property type="project" value="GO_Central"/>
</dbReference>
<dbReference type="GO" id="GO:0005184">
    <property type="term" value="F:neuropeptide hormone activity"/>
    <property type="evidence" value="ECO:0000250"/>
    <property type="project" value="UniProtKB"/>
</dbReference>
<dbReference type="GO" id="GO:0031764">
    <property type="term" value="F:type 1 galanin receptor binding"/>
    <property type="evidence" value="ECO:0000250"/>
    <property type="project" value="UniProtKB"/>
</dbReference>
<dbReference type="GO" id="GO:0031765">
    <property type="term" value="F:type 2 galanin receptor binding"/>
    <property type="evidence" value="ECO:0000250"/>
    <property type="project" value="UniProtKB"/>
</dbReference>
<dbReference type="GO" id="GO:0031766">
    <property type="term" value="F:type 3 galanin receptor binding"/>
    <property type="evidence" value="ECO:0000250"/>
    <property type="project" value="UniProtKB"/>
</dbReference>
<dbReference type="GO" id="GO:0007631">
    <property type="term" value="P:feeding behavior"/>
    <property type="evidence" value="ECO:0000314"/>
    <property type="project" value="RGD"/>
</dbReference>
<dbReference type="GO" id="GO:0008285">
    <property type="term" value="P:negative regulation of cell population proliferation"/>
    <property type="evidence" value="ECO:0000314"/>
    <property type="project" value="RGD"/>
</dbReference>
<dbReference type="GO" id="GO:0050672">
    <property type="term" value="P:negative regulation of lymphocyte proliferation"/>
    <property type="evidence" value="ECO:0000314"/>
    <property type="project" value="RGD"/>
</dbReference>
<dbReference type="GO" id="GO:0007399">
    <property type="term" value="P:nervous system development"/>
    <property type="evidence" value="ECO:0000266"/>
    <property type="project" value="RGD"/>
</dbReference>
<dbReference type="GO" id="GO:0007218">
    <property type="term" value="P:neuropeptide signaling pathway"/>
    <property type="evidence" value="ECO:0000266"/>
    <property type="project" value="RGD"/>
</dbReference>
<dbReference type="GO" id="GO:0060746">
    <property type="term" value="P:parental behavior"/>
    <property type="evidence" value="ECO:0000266"/>
    <property type="project" value="RGD"/>
</dbReference>
<dbReference type="GO" id="GO:0043065">
    <property type="term" value="P:positive regulation of apoptotic process"/>
    <property type="evidence" value="ECO:0000314"/>
    <property type="project" value="RGD"/>
</dbReference>
<dbReference type="GO" id="GO:0051464">
    <property type="term" value="P:positive regulation of cortisol secretion"/>
    <property type="evidence" value="ECO:0000266"/>
    <property type="project" value="RGD"/>
</dbReference>
<dbReference type="GO" id="GO:0051795">
    <property type="term" value="P:positive regulation of timing of catagen"/>
    <property type="evidence" value="ECO:0000266"/>
    <property type="project" value="RGD"/>
</dbReference>
<dbReference type="GO" id="GO:0045944">
    <property type="term" value="P:positive regulation of transcription by RNA polymerase II"/>
    <property type="evidence" value="ECO:0000250"/>
    <property type="project" value="UniProtKB"/>
</dbReference>
<dbReference type="GO" id="GO:0010737">
    <property type="term" value="P:protein kinase A signaling"/>
    <property type="evidence" value="ECO:0000266"/>
    <property type="project" value="RGD"/>
</dbReference>
<dbReference type="GO" id="GO:0031943">
    <property type="term" value="P:regulation of glucocorticoid metabolic process"/>
    <property type="evidence" value="ECO:0000315"/>
    <property type="project" value="RGD"/>
</dbReference>
<dbReference type="GO" id="GO:0050776">
    <property type="term" value="P:regulation of immune response"/>
    <property type="evidence" value="ECO:0000304"/>
    <property type="project" value="RGD"/>
</dbReference>
<dbReference type="GO" id="GO:0043627">
    <property type="term" value="P:response to estrogen"/>
    <property type="evidence" value="ECO:0000270"/>
    <property type="project" value="RGD"/>
</dbReference>
<dbReference type="GO" id="GO:0035902">
    <property type="term" value="P:response to immobilization stress"/>
    <property type="evidence" value="ECO:0000270"/>
    <property type="project" value="RGD"/>
</dbReference>
<dbReference type="GO" id="GO:0032868">
    <property type="term" value="P:response to insulin"/>
    <property type="evidence" value="ECO:0000270"/>
    <property type="project" value="RGD"/>
</dbReference>
<dbReference type="GO" id="GO:0009410">
    <property type="term" value="P:response to xenobiotic stimulus"/>
    <property type="evidence" value="ECO:0000270"/>
    <property type="project" value="RGD"/>
</dbReference>
<dbReference type="InterPro" id="IPR008174">
    <property type="entry name" value="Galanin"/>
</dbReference>
<dbReference type="InterPro" id="IPR008175">
    <property type="entry name" value="Galanin_pre"/>
</dbReference>
<dbReference type="InterPro" id="IPR013068">
    <property type="entry name" value="GMAP"/>
</dbReference>
<dbReference type="PANTHER" id="PTHR16839">
    <property type="entry name" value="GALANIN"/>
    <property type="match status" value="1"/>
</dbReference>
<dbReference type="PANTHER" id="PTHR16839:SF1">
    <property type="entry name" value="GALANIN PEPTIDES"/>
    <property type="match status" value="1"/>
</dbReference>
<dbReference type="Pfam" id="PF01296">
    <property type="entry name" value="Galanin"/>
    <property type="match status" value="1"/>
</dbReference>
<dbReference type="Pfam" id="PF06540">
    <property type="entry name" value="GMAP"/>
    <property type="match status" value="1"/>
</dbReference>
<dbReference type="PRINTS" id="PR00273">
    <property type="entry name" value="GALANIN"/>
</dbReference>
<dbReference type="SMART" id="SM00071">
    <property type="entry name" value="Galanin"/>
    <property type="match status" value="1"/>
</dbReference>
<dbReference type="PROSITE" id="PS00861">
    <property type="entry name" value="GALANIN"/>
    <property type="match status" value="1"/>
</dbReference>
<sequence length="124" mass="13328">MARGSVILLAWLLLVATLSATLGLGMPTKEKRGWTLNSAGYLLGPHAIDNHRSFSDKHGLTGKRELPLEVEEGRLGSVAVPLPESNIVRTIMEFLSFLHLKEAGALDSLPGIPLATSSEDLEQS</sequence>
<evidence type="ECO:0000250" key="1">
    <source>
        <dbReference type="UniProtKB" id="P07480"/>
    </source>
</evidence>
<evidence type="ECO:0000250" key="2">
    <source>
        <dbReference type="UniProtKB" id="P22466"/>
    </source>
</evidence>
<evidence type="ECO:0000255" key="3"/>
<evidence type="ECO:0000269" key="4">
    <source>
    </source>
</evidence>
<evidence type="ECO:0000305" key="5"/>
<gene>
    <name type="primary">Gal</name>
    <name type="synonym">Galn</name>
</gene>
<comment type="function">
    <text evidence="1 2">Endocrine hormone of the central and peripheral nervous systems that binds and activates the G protein-coupled receptors GALR1, GALR2, and GALR3. This small neuropeptide may regulate diverse physiologic functions including contraction of smooth muscle of the gastrointestinal and genitourinary tract, growth hormone and insulin release and adrenal secretion.</text>
</comment>
<comment type="subcellular location">
    <subcellularLocation>
        <location evidence="1 2">Secreted</location>
    </subcellularLocation>
</comment>
<comment type="similarity">
    <text evidence="5">Belongs to the galanin family.</text>
</comment>
<organism>
    <name type="scientific">Rattus norvegicus</name>
    <name type="common">Rat</name>
    <dbReference type="NCBI Taxonomy" id="10116"/>
    <lineage>
        <taxon>Eukaryota</taxon>
        <taxon>Metazoa</taxon>
        <taxon>Chordata</taxon>
        <taxon>Craniata</taxon>
        <taxon>Vertebrata</taxon>
        <taxon>Euteleostomi</taxon>
        <taxon>Mammalia</taxon>
        <taxon>Eutheria</taxon>
        <taxon>Euarchontoglires</taxon>
        <taxon>Glires</taxon>
        <taxon>Rodentia</taxon>
        <taxon>Myomorpha</taxon>
        <taxon>Muroidea</taxon>
        <taxon>Muridae</taxon>
        <taxon>Murinae</taxon>
        <taxon>Rattus</taxon>
    </lineage>
</organism>